<reference key="1">
    <citation type="submission" date="2005-10" db="EMBL/GenBank/DDBJ databases">
        <title>Complete sequence of Pelobacter carbinolicus DSM 2380.</title>
        <authorList>
            <person name="Copeland A."/>
            <person name="Lucas S."/>
            <person name="Lapidus A."/>
            <person name="Barry K."/>
            <person name="Detter J.C."/>
            <person name="Glavina T."/>
            <person name="Hammon N."/>
            <person name="Israni S."/>
            <person name="Pitluck S."/>
            <person name="Chertkov O."/>
            <person name="Schmutz J."/>
            <person name="Larimer F."/>
            <person name="Land M."/>
            <person name="Kyrpides N."/>
            <person name="Ivanova N."/>
            <person name="Richardson P."/>
        </authorList>
    </citation>
    <scope>NUCLEOTIDE SEQUENCE [LARGE SCALE GENOMIC DNA]</scope>
    <source>
        <strain>DSM 2380 / NBRC 103641 / GraBd1</strain>
    </source>
</reference>
<sequence length="713" mass="80503">MDAPIKFFATAPKGVEPLLADELRALGALEVSETRAGASFQGSLETAYRICLWSRLASRVLMPIAEFSAEDPDQLYAAVGAVPWEEHMTAAGTLAVDAQLRRSKINHSRFAALRVKDAVVDRFRERFDQRPSIDLERPDIRLNLHIDRDQATLSLDLSGDSLHRRGYRAEGVLAPLKENLAAAILLRAGWPDVGARGGALVDPMCGSGTLVIEAALITADCAPGLTRPYWGFAGWLQHRAEVWDTLLEEARQRREAGLQQLPCMIGYDRDRKAIRAARENARLAGLDAHLRFERCELEDLQAVPDAGESGGLLVTNPPYGERLGEVDELRSLYASLGEKLRTHFSGWQAAVFTGNPELAKHIGIRAHKLYKLYNGALECRLLNFDIAEQRFFGADAPQAPLSEGAIMFANRLRKNIKQLRRWLKKEDVTCYRLYDADMPEYAVAVDIYEDRVHVQEYQAPASVDSRQAERRLREVMRVLPEVLQVEPEAITLKVRRKQKGSSQYQKLDRSGERFEVREGNCWFLVNLTDYLDTGLFLDHRPTRFMLQAMAEGKSFLNLFAYTGTATVHAVKGGAATTVTVDMSRTYLDWAQANLRLNQLSGPQHRFVCADVLQYLEREQAHYDLIFLDPPTFSTSKSMETTLDIQRDHVDIIRLAANLLTPGGVLIFSNNFRKFRMDFESLPELEIENITAATIPHDFARNPKIHNCWRITRR</sequence>
<name>RLMKL_SYNC1</name>
<proteinExistence type="inferred from homology"/>
<dbReference type="EC" id="2.1.1.173" evidence="1"/>
<dbReference type="EC" id="2.1.1.264" evidence="1"/>
<dbReference type="EMBL" id="CP000142">
    <property type="protein sequence ID" value="ABA89312.1"/>
    <property type="molecule type" value="Genomic_DNA"/>
</dbReference>
<dbReference type="RefSeq" id="WP_011341824.1">
    <property type="nucleotide sequence ID" value="NC_007498.2"/>
</dbReference>
<dbReference type="SMR" id="Q3A2U5"/>
<dbReference type="STRING" id="338963.Pcar_2072"/>
<dbReference type="KEGG" id="pca:Pcar_2072"/>
<dbReference type="eggNOG" id="COG0116">
    <property type="taxonomic scope" value="Bacteria"/>
</dbReference>
<dbReference type="eggNOG" id="COG1092">
    <property type="taxonomic scope" value="Bacteria"/>
</dbReference>
<dbReference type="HOGENOM" id="CLU_014042_2_0_7"/>
<dbReference type="OrthoDB" id="9809404at2"/>
<dbReference type="Proteomes" id="UP000002534">
    <property type="component" value="Chromosome"/>
</dbReference>
<dbReference type="GO" id="GO:0005737">
    <property type="term" value="C:cytoplasm"/>
    <property type="evidence" value="ECO:0007669"/>
    <property type="project" value="UniProtKB-SubCell"/>
</dbReference>
<dbReference type="GO" id="GO:0052915">
    <property type="term" value="F:23S rRNA (guanine(2445)-N(2))-methyltransferase activity"/>
    <property type="evidence" value="ECO:0007669"/>
    <property type="project" value="UniProtKB-UniRule"/>
</dbReference>
<dbReference type="GO" id="GO:0003723">
    <property type="term" value="F:RNA binding"/>
    <property type="evidence" value="ECO:0007669"/>
    <property type="project" value="UniProtKB-KW"/>
</dbReference>
<dbReference type="GO" id="GO:0070043">
    <property type="term" value="F:rRNA (guanine-N7-)-methyltransferase activity"/>
    <property type="evidence" value="ECO:0007669"/>
    <property type="project" value="UniProtKB-UniRule"/>
</dbReference>
<dbReference type="CDD" id="cd02440">
    <property type="entry name" value="AdoMet_MTases"/>
    <property type="match status" value="1"/>
</dbReference>
<dbReference type="CDD" id="cd11715">
    <property type="entry name" value="THUMP_AdoMetMT"/>
    <property type="match status" value="1"/>
</dbReference>
<dbReference type="Gene3D" id="3.30.2130.30">
    <property type="match status" value="1"/>
</dbReference>
<dbReference type="Gene3D" id="3.30.750.80">
    <property type="entry name" value="RNA methyltransferase domain (HRMD) like"/>
    <property type="match status" value="1"/>
</dbReference>
<dbReference type="Gene3D" id="3.40.50.150">
    <property type="entry name" value="Vaccinia Virus protein VP39"/>
    <property type="match status" value="2"/>
</dbReference>
<dbReference type="HAMAP" id="MF_01858">
    <property type="entry name" value="23SrRNA_methyltr_KL"/>
    <property type="match status" value="1"/>
</dbReference>
<dbReference type="InterPro" id="IPR017244">
    <property type="entry name" value="23SrRNA_methyltr_KL"/>
</dbReference>
<dbReference type="InterPro" id="IPR002052">
    <property type="entry name" value="DNA_methylase_N6_adenine_CS"/>
</dbReference>
<dbReference type="InterPro" id="IPR000241">
    <property type="entry name" value="RlmKL-like_Mtase"/>
</dbReference>
<dbReference type="InterPro" id="IPR053943">
    <property type="entry name" value="RlmKL-like_Mtase_CS"/>
</dbReference>
<dbReference type="InterPro" id="IPR054170">
    <property type="entry name" value="RlmL_1st"/>
</dbReference>
<dbReference type="InterPro" id="IPR019614">
    <property type="entry name" value="SAM-dep_methyl-trfase"/>
</dbReference>
<dbReference type="InterPro" id="IPR029063">
    <property type="entry name" value="SAM-dependent_MTases_sf"/>
</dbReference>
<dbReference type="InterPro" id="IPR004114">
    <property type="entry name" value="THUMP_dom"/>
</dbReference>
<dbReference type="NCBIfam" id="NF008748">
    <property type="entry name" value="PRK11783.1"/>
    <property type="match status" value="1"/>
</dbReference>
<dbReference type="PANTHER" id="PTHR47313">
    <property type="entry name" value="RIBOSOMAL RNA LARGE SUBUNIT METHYLTRANSFERASE K/L"/>
    <property type="match status" value="1"/>
</dbReference>
<dbReference type="PANTHER" id="PTHR47313:SF1">
    <property type="entry name" value="RIBOSOMAL RNA LARGE SUBUNIT METHYLTRANSFERASE K_L"/>
    <property type="match status" value="1"/>
</dbReference>
<dbReference type="Pfam" id="PF10672">
    <property type="entry name" value="Methyltrans_SAM"/>
    <property type="match status" value="1"/>
</dbReference>
<dbReference type="Pfam" id="PF22020">
    <property type="entry name" value="RlmL_1st"/>
    <property type="match status" value="1"/>
</dbReference>
<dbReference type="Pfam" id="PF02926">
    <property type="entry name" value="THUMP"/>
    <property type="match status" value="1"/>
</dbReference>
<dbReference type="Pfam" id="PF01170">
    <property type="entry name" value="UPF0020"/>
    <property type="match status" value="1"/>
</dbReference>
<dbReference type="PIRSF" id="PIRSF037618">
    <property type="entry name" value="RNA_Mtase_bacteria_prd"/>
    <property type="match status" value="1"/>
</dbReference>
<dbReference type="SMART" id="SM00981">
    <property type="entry name" value="THUMP"/>
    <property type="match status" value="1"/>
</dbReference>
<dbReference type="SUPFAM" id="SSF53335">
    <property type="entry name" value="S-adenosyl-L-methionine-dependent methyltransferases"/>
    <property type="match status" value="2"/>
</dbReference>
<dbReference type="PROSITE" id="PS51165">
    <property type="entry name" value="THUMP"/>
    <property type="match status" value="1"/>
</dbReference>
<dbReference type="PROSITE" id="PS01261">
    <property type="entry name" value="UPF0020"/>
    <property type="match status" value="1"/>
</dbReference>
<comment type="function">
    <text evidence="1">Specifically methylates the guanine in position 2445 (m2G2445) and the guanine in position 2069 (m7G2069) of 23S rRNA.</text>
</comment>
<comment type="catalytic activity">
    <reaction evidence="1">
        <text>guanosine(2445) in 23S rRNA + S-adenosyl-L-methionine = N(2)-methylguanosine(2445) in 23S rRNA + S-adenosyl-L-homocysteine + H(+)</text>
        <dbReference type="Rhea" id="RHEA:42740"/>
        <dbReference type="Rhea" id="RHEA-COMP:10215"/>
        <dbReference type="Rhea" id="RHEA-COMP:10216"/>
        <dbReference type="ChEBI" id="CHEBI:15378"/>
        <dbReference type="ChEBI" id="CHEBI:57856"/>
        <dbReference type="ChEBI" id="CHEBI:59789"/>
        <dbReference type="ChEBI" id="CHEBI:74269"/>
        <dbReference type="ChEBI" id="CHEBI:74481"/>
        <dbReference type="EC" id="2.1.1.173"/>
    </reaction>
</comment>
<comment type="catalytic activity">
    <reaction evidence="1">
        <text>guanosine(2069) in 23S rRNA + S-adenosyl-L-methionine = N(2)-methylguanosine(2069) in 23S rRNA + S-adenosyl-L-homocysteine + H(+)</text>
        <dbReference type="Rhea" id="RHEA:43772"/>
        <dbReference type="Rhea" id="RHEA-COMP:10688"/>
        <dbReference type="Rhea" id="RHEA-COMP:10689"/>
        <dbReference type="ChEBI" id="CHEBI:15378"/>
        <dbReference type="ChEBI" id="CHEBI:57856"/>
        <dbReference type="ChEBI" id="CHEBI:59789"/>
        <dbReference type="ChEBI" id="CHEBI:74269"/>
        <dbReference type="ChEBI" id="CHEBI:74481"/>
        <dbReference type="EC" id="2.1.1.264"/>
    </reaction>
</comment>
<comment type="subcellular location">
    <subcellularLocation>
        <location evidence="1">Cytoplasm</location>
    </subcellularLocation>
</comment>
<comment type="similarity">
    <text evidence="1">Belongs to the methyltransferase superfamily. RlmKL family.</text>
</comment>
<organism>
    <name type="scientific">Syntrophotalea carbinolica (strain DSM 2380 / NBRC 103641 / GraBd1)</name>
    <name type="common">Pelobacter carbinolicus</name>
    <dbReference type="NCBI Taxonomy" id="338963"/>
    <lineage>
        <taxon>Bacteria</taxon>
        <taxon>Pseudomonadati</taxon>
        <taxon>Thermodesulfobacteriota</taxon>
        <taxon>Desulfuromonadia</taxon>
        <taxon>Desulfuromonadales</taxon>
        <taxon>Syntrophotaleaceae</taxon>
        <taxon>Syntrophotalea</taxon>
    </lineage>
</organism>
<gene>
    <name evidence="1" type="primary">rlmL</name>
    <name type="ordered locus">Pcar_2072</name>
</gene>
<protein>
    <recommendedName>
        <fullName evidence="1">Ribosomal RNA large subunit methyltransferase K/L</fullName>
    </recommendedName>
    <domain>
        <recommendedName>
            <fullName evidence="1">23S rRNA m2G2445 methyltransferase</fullName>
            <ecNumber evidence="1">2.1.1.173</ecNumber>
        </recommendedName>
        <alternativeName>
            <fullName evidence="1">rRNA (guanine-N(2)-)-methyltransferase RlmL</fullName>
        </alternativeName>
    </domain>
    <domain>
        <recommendedName>
            <fullName evidence="1">23S rRNA m7G2069 methyltransferase</fullName>
            <ecNumber evidence="1">2.1.1.264</ecNumber>
        </recommendedName>
        <alternativeName>
            <fullName evidence="1">rRNA (guanine-N(7)-)-methyltransferase RlmK</fullName>
        </alternativeName>
    </domain>
</protein>
<feature type="chain" id="PRO_0000366779" description="Ribosomal RNA large subunit methyltransferase K/L">
    <location>
        <begin position="1"/>
        <end position="713"/>
    </location>
</feature>
<feature type="domain" description="THUMP" evidence="1">
    <location>
        <begin position="46"/>
        <end position="157"/>
    </location>
</feature>
<accession>Q3A2U5</accession>
<keyword id="KW-0963">Cytoplasm</keyword>
<keyword id="KW-0489">Methyltransferase</keyword>
<keyword id="KW-1185">Reference proteome</keyword>
<keyword id="KW-0694">RNA-binding</keyword>
<keyword id="KW-0698">rRNA processing</keyword>
<keyword id="KW-0949">S-adenosyl-L-methionine</keyword>
<keyword id="KW-0808">Transferase</keyword>
<evidence type="ECO:0000255" key="1">
    <source>
        <dbReference type="HAMAP-Rule" id="MF_01858"/>
    </source>
</evidence>